<dbReference type="EC" id="3.1.4.4"/>
<dbReference type="EMBL" id="AAFI02000040">
    <property type="protein sequence ID" value="EAL66812.1"/>
    <property type="molecule type" value="Genomic_DNA"/>
</dbReference>
<dbReference type="RefSeq" id="XP_640776.1">
    <property type="nucleotide sequence ID" value="XM_635684.1"/>
</dbReference>
<dbReference type="SMR" id="Q54UK0"/>
<dbReference type="FunCoup" id="Q54UK0">
    <property type="interactions" value="82"/>
</dbReference>
<dbReference type="STRING" id="44689.Q54UK0"/>
<dbReference type="PaxDb" id="44689-DDB0231506"/>
<dbReference type="EnsemblProtists" id="EAL66812">
    <property type="protein sequence ID" value="EAL66812"/>
    <property type="gene ID" value="DDB_G0281031"/>
</dbReference>
<dbReference type="GeneID" id="8622829"/>
<dbReference type="KEGG" id="ddi:DDB_G0281031"/>
<dbReference type="dictyBase" id="DDB_G0281031">
    <property type="gene designation" value="pldA"/>
</dbReference>
<dbReference type="VEuPathDB" id="AmoebaDB:DDB_G0281031"/>
<dbReference type="eggNOG" id="KOG1329">
    <property type="taxonomic scope" value="Eukaryota"/>
</dbReference>
<dbReference type="HOGENOM" id="CLU_264129_0_0_1"/>
<dbReference type="InParanoid" id="Q54UK0"/>
<dbReference type="OMA" id="LRSMDEW"/>
<dbReference type="BRENDA" id="3.1.4.4">
    <property type="organism ID" value="1939"/>
</dbReference>
<dbReference type="Reactome" id="R-DDI-1483166">
    <property type="pathway name" value="Synthesis of PA"/>
</dbReference>
<dbReference type="Reactome" id="R-DDI-2029485">
    <property type="pathway name" value="Role of phospholipids in phagocytosis"/>
</dbReference>
<dbReference type="Reactome" id="R-DDI-6798695">
    <property type="pathway name" value="Neutrophil degranulation"/>
</dbReference>
<dbReference type="Reactome" id="R-DDI-9013149">
    <property type="pathway name" value="RAC1 GTPase cycle"/>
</dbReference>
<dbReference type="Reactome" id="R-DDI-9013408">
    <property type="pathway name" value="RHOG GTPase cycle"/>
</dbReference>
<dbReference type="PRO" id="PR:Q54UK0"/>
<dbReference type="Proteomes" id="UP000002195">
    <property type="component" value="Chromosome 3"/>
</dbReference>
<dbReference type="GO" id="GO:0004630">
    <property type="term" value="F:phospholipase D activity"/>
    <property type="evidence" value="ECO:0000250"/>
    <property type="project" value="dictyBase"/>
</dbReference>
<dbReference type="GO" id="GO:0009395">
    <property type="term" value="P:phospholipid catabolic process"/>
    <property type="evidence" value="ECO:0000318"/>
    <property type="project" value="GO_Central"/>
</dbReference>
<dbReference type="GO" id="GO:0006644">
    <property type="term" value="P:phospholipid metabolic process"/>
    <property type="evidence" value="ECO:0000250"/>
    <property type="project" value="dictyBase"/>
</dbReference>
<dbReference type="CDD" id="cd09138">
    <property type="entry name" value="PLDc_vPLD1_2_yPLD_like_1"/>
    <property type="match status" value="1"/>
</dbReference>
<dbReference type="CDD" id="cd09141">
    <property type="entry name" value="PLDc_vPLD1_2_yPLD_like_2"/>
    <property type="match status" value="1"/>
</dbReference>
<dbReference type="Gene3D" id="3.30.870.10">
    <property type="entry name" value="Endonuclease Chain A"/>
    <property type="match status" value="2"/>
</dbReference>
<dbReference type="InterPro" id="IPR025202">
    <property type="entry name" value="PLD-like_dom"/>
</dbReference>
<dbReference type="InterPro" id="IPR001736">
    <property type="entry name" value="PLipase_D/transphosphatidylase"/>
</dbReference>
<dbReference type="InterPro" id="IPR015679">
    <property type="entry name" value="PLipase_D_fam"/>
</dbReference>
<dbReference type="PANTHER" id="PTHR18896">
    <property type="entry name" value="PHOSPHOLIPASE D"/>
    <property type="match status" value="1"/>
</dbReference>
<dbReference type="PANTHER" id="PTHR18896:SF182">
    <property type="entry name" value="PHOSPHOLIPASE D A"/>
    <property type="match status" value="1"/>
</dbReference>
<dbReference type="Pfam" id="PF00614">
    <property type="entry name" value="PLDc"/>
    <property type="match status" value="1"/>
</dbReference>
<dbReference type="Pfam" id="PF13091">
    <property type="entry name" value="PLDc_2"/>
    <property type="match status" value="1"/>
</dbReference>
<dbReference type="SMART" id="SM00155">
    <property type="entry name" value="PLDc"/>
    <property type="match status" value="2"/>
</dbReference>
<dbReference type="SUPFAM" id="SSF56024">
    <property type="entry name" value="Phospholipase D/nuclease"/>
    <property type="match status" value="2"/>
</dbReference>
<dbReference type="PROSITE" id="PS50035">
    <property type="entry name" value="PLD"/>
    <property type="match status" value="2"/>
</dbReference>
<accession>Q54UK0</accession>
<proteinExistence type="evidence at transcript level"/>
<keyword id="KW-0175">Coiled coil</keyword>
<keyword id="KW-0378">Hydrolase</keyword>
<keyword id="KW-0442">Lipid degradation</keyword>
<keyword id="KW-0443">Lipid metabolism</keyword>
<keyword id="KW-1185">Reference proteome</keyword>
<keyword id="KW-0677">Repeat</keyword>
<reference key="1">
    <citation type="journal article" date="2005" name="Nature">
        <title>The genome of the social amoeba Dictyostelium discoideum.</title>
        <authorList>
            <person name="Eichinger L."/>
            <person name="Pachebat J.A."/>
            <person name="Gloeckner G."/>
            <person name="Rajandream M.A."/>
            <person name="Sucgang R."/>
            <person name="Berriman M."/>
            <person name="Song J."/>
            <person name="Olsen R."/>
            <person name="Szafranski K."/>
            <person name="Xu Q."/>
            <person name="Tunggal B."/>
            <person name="Kummerfeld S."/>
            <person name="Madera M."/>
            <person name="Konfortov B.A."/>
            <person name="Rivero F."/>
            <person name="Bankier A.T."/>
            <person name="Lehmann R."/>
            <person name="Hamlin N."/>
            <person name="Davies R."/>
            <person name="Gaudet P."/>
            <person name="Fey P."/>
            <person name="Pilcher K."/>
            <person name="Chen G."/>
            <person name="Saunders D."/>
            <person name="Sodergren E.J."/>
            <person name="Davis P."/>
            <person name="Kerhornou A."/>
            <person name="Nie X."/>
            <person name="Hall N."/>
            <person name="Anjard C."/>
            <person name="Hemphill L."/>
            <person name="Bason N."/>
            <person name="Farbrother P."/>
            <person name="Desany B."/>
            <person name="Just E."/>
            <person name="Morio T."/>
            <person name="Rost R."/>
            <person name="Churcher C.M."/>
            <person name="Cooper J."/>
            <person name="Haydock S."/>
            <person name="van Driessche N."/>
            <person name="Cronin A."/>
            <person name="Goodhead I."/>
            <person name="Muzny D.M."/>
            <person name="Mourier T."/>
            <person name="Pain A."/>
            <person name="Lu M."/>
            <person name="Harper D."/>
            <person name="Lindsay R."/>
            <person name="Hauser H."/>
            <person name="James K.D."/>
            <person name="Quiles M."/>
            <person name="Madan Babu M."/>
            <person name="Saito T."/>
            <person name="Buchrieser C."/>
            <person name="Wardroper A."/>
            <person name="Felder M."/>
            <person name="Thangavelu M."/>
            <person name="Johnson D."/>
            <person name="Knights A."/>
            <person name="Loulseged H."/>
            <person name="Mungall K.L."/>
            <person name="Oliver K."/>
            <person name="Price C."/>
            <person name="Quail M.A."/>
            <person name="Urushihara H."/>
            <person name="Hernandez J."/>
            <person name="Rabbinowitsch E."/>
            <person name="Steffen D."/>
            <person name="Sanders M."/>
            <person name="Ma J."/>
            <person name="Kohara Y."/>
            <person name="Sharp S."/>
            <person name="Simmonds M.N."/>
            <person name="Spiegler S."/>
            <person name="Tivey A."/>
            <person name="Sugano S."/>
            <person name="White B."/>
            <person name="Walker D."/>
            <person name="Woodward J.R."/>
            <person name="Winckler T."/>
            <person name="Tanaka Y."/>
            <person name="Shaulsky G."/>
            <person name="Schleicher M."/>
            <person name="Weinstock G.M."/>
            <person name="Rosenthal A."/>
            <person name="Cox E.C."/>
            <person name="Chisholm R.L."/>
            <person name="Gibbs R.A."/>
            <person name="Loomis W.F."/>
            <person name="Platzer M."/>
            <person name="Kay R.R."/>
            <person name="Williams J.G."/>
            <person name="Dear P.H."/>
            <person name="Noegel A.A."/>
            <person name="Barrell B.G."/>
            <person name="Kuspa A."/>
        </authorList>
    </citation>
    <scope>NUCLEOTIDE SEQUENCE [LARGE SCALE GENOMIC DNA]</scope>
    <source>
        <strain>AX4</strain>
    </source>
</reference>
<reference key="2">
    <citation type="journal article" date="1984" name="Biochim. Biophys. Acta">
        <title>Comparison of the hydrolysis of phosphatidylethanolamine and phosphatidyl(N-acyl)ethanolamine in Dictyostelium discoideum amoebae.</title>
        <authorList>
            <person name="Ellingson J.S."/>
            <person name="Dischinger H.C."/>
        </authorList>
    </citation>
    <scope>FUNCTION</scope>
</reference>
<reference key="3">
    <citation type="journal article" date="1993" name="J. Biol. Chem.">
        <title>Developmentally regulated changes in 1,2-diacylglycerol in Dictyostelium. Regulation by light and G proteins.</title>
        <authorList>
            <person name="Cubitt A.B."/>
            <person name="Dharmawardhane S."/>
            <person name="Firtel R.A."/>
        </authorList>
    </citation>
    <scope>FUNCTION</scope>
</reference>
<reference key="4">
    <citation type="journal article" date="2004" name="FEBS Lett.">
        <title>A distant evolutionary relationship between GPI-specific phospholipase D and bacterial phosphatidylcholine-preferring phospholipase C.</title>
        <authorList>
            <person name="Rigden D.J."/>
        </authorList>
    </citation>
    <scope>NOMENCLATURE</scope>
</reference>
<reference key="5">
    <citation type="journal article" date="2005" name="Biochem. J.">
        <title>Phospholipase D activity is essential for actin localization and actin-based motility in Dictyostelium.</title>
        <authorList>
            <person name="Zouwail S."/>
            <person name="Pettitt T.R."/>
            <person name="Dove S.K."/>
            <person name="Chibalina M.V."/>
            <person name="Powner D.J."/>
            <person name="Haynes L."/>
            <person name="Wakelam M.J.O."/>
            <person name="Insall R.H."/>
        </authorList>
    </citation>
    <scope>ACTIVITY REGULATION</scope>
    <scope>FUNCTION</scope>
</reference>
<reference key="6">
    <citation type="journal article" date="2005" name="Eukaryot. Cell">
        <title>PldB, a putative phospholipase D homologue in Dictyostelium discoideum mediates quorum sensing during development.</title>
        <authorList>
            <person name="Chen Y."/>
            <person name="Rodrick V."/>
            <person name="Yan Y."/>
            <person name="Brazill D."/>
        </authorList>
    </citation>
    <scope>DEVELOPMENTAL STAGE</scope>
</reference>
<reference key="7">
    <citation type="journal article" date="2006" name="Eur. J. Cell Biol.">
        <title>Rho GTPase signaling in Dictyostelium discoideum: insights from the genome.</title>
        <authorList>
            <person name="Vlahou G."/>
            <person name="Rivero F."/>
        </authorList>
    </citation>
    <scope>NOMENCLATURE</scope>
</reference>
<feature type="chain" id="PRO_0000367470" description="Phospholipase D A">
    <location>
        <begin position="1"/>
        <end position="1269"/>
    </location>
</feature>
<feature type="domain" description="PLD phosphodiesterase 1" evidence="2">
    <location>
        <begin position="435"/>
        <end position="462"/>
    </location>
</feature>
<feature type="domain" description="PLD phosphodiesterase 2" evidence="2">
    <location>
        <begin position="704"/>
        <end position="731"/>
    </location>
</feature>
<feature type="region of interest" description="Disordered" evidence="3">
    <location>
        <begin position="55"/>
        <end position="121"/>
    </location>
</feature>
<feature type="region of interest" description="Disordered" evidence="3">
    <location>
        <begin position="222"/>
        <end position="269"/>
    </location>
</feature>
<feature type="region of interest" description="Disordered" evidence="3">
    <location>
        <begin position="300"/>
        <end position="320"/>
    </location>
</feature>
<feature type="region of interest" description="Disordered" evidence="3">
    <location>
        <begin position="810"/>
        <end position="966"/>
    </location>
</feature>
<feature type="region of interest" description="Disordered" evidence="3">
    <location>
        <begin position="983"/>
        <end position="1007"/>
    </location>
</feature>
<feature type="region of interest" description="Disordered" evidence="3">
    <location>
        <begin position="1116"/>
        <end position="1167"/>
    </location>
</feature>
<feature type="coiled-coil region" evidence="1">
    <location>
        <begin position="131"/>
        <end position="192"/>
    </location>
</feature>
<feature type="coiled-coil region" evidence="1">
    <location>
        <begin position="803"/>
        <end position="835"/>
    </location>
</feature>
<feature type="coiled-coil region" evidence="1">
    <location>
        <begin position="1059"/>
        <end position="1096"/>
    </location>
</feature>
<feature type="compositionally biased region" description="Polar residues" evidence="3">
    <location>
        <begin position="55"/>
        <end position="64"/>
    </location>
</feature>
<feature type="compositionally biased region" description="Low complexity" evidence="3">
    <location>
        <begin position="65"/>
        <end position="87"/>
    </location>
</feature>
<feature type="compositionally biased region" description="Low complexity" evidence="3">
    <location>
        <begin position="95"/>
        <end position="114"/>
    </location>
</feature>
<feature type="compositionally biased region" description="Polar residues" evidence="3">
    <location>
        <begin position="222"/>
        <end position="232"/>
    </location>
</feature>
<feature type="compositionally biased region" description="Low complexity" evidence="3">
    <location>
        <begin position="233"/>
        <end position="269"/>
    </location>
</feature>
<feature type="compositionally biased region" description="Low complexity" evidence="3">
    <location>
        <begin position="810"/>
        <end position="850"/>
    </location>
</feature>
<feature type="compositionally biased region" description="Low complexity" evidence="3">
    <location>
        <begin position="859"/>
        <end position="906"/>
    </location>
</feature>
<feature type="compositionally biased region" description="Low complexity" evidence="3">
    <location>
        <begin position="934"/>
        <end position="943"/>
    </location>
</feature>
<feature type="compositionally biased region" description="Pro residues" evidence="3">
    <location>
        <begin position="987"/>
        <end position="1003"/>
    </location>
</feature>
<feature type="compositionally biased region" description="Low complexity" evidence="3">
    <location>
        <begin position="1122"/>
        <end position="1142"/>
    </location>
</feature>
<feature type="compositionally biased region" description="Polar residues" evidence="3">
    <location>
        <begin position="1148"/>
        <end position="1162"/>
    </location>
</feature>
<feature type="active site" evidence="2">
    <location>
        <position position="440"/>
    </location>
</feature>
<feature type="active site" evidence="2">
    <location>
        <position position="442"/>
    </location>
</feature>
<feature type="active site" evidence="2">
    <location>
        <position position="447"/>
    </location>
</feature>
<feature type="active site" evidence="2">
    <location>
        <position position="709"/>
    </location>
</feature>
<feature type="active site" evidence="2">
    <location>
        <position position="711"/>
    </location>
</feature>
<feature type="active site" evidence="2">
    <location>
        <position position="716"/>
    </location>
</feature>
<evidence type="ECO:0000255" key="1"/>
<evidence type="ECO:0000255" key="2">
    <source>
        <dbReference type="PROSITE-ProRule" id="PRU00153"/>
    </source>
</evidence>
<evidence type="ECO:0000256" key="3">
    <source>
        <dbReference type="SAM" id="MobiDB-lite"/>
    </source>
</evidence>
<evidence type="ECO:0000269" key="4">
    <source>
    </source>
</evidence>
<evidence type="ECO:0000269" key="5">
    <source>
    </source>
</evidence>
<evidence type="ECO:0000269" key="6">
    <source>
    </source>
</evidence>
<evidence type="ECO:0000269" key="7">
    <source>
    </source>
</evidence>
<evidence type="ECO:0000305" key="8"/>
<name>PLDA_DICDI</name>
<gene>
    <name type="primary">pldA</name>
    <name type="synonym">pld1</name>
    <name type="ORF">DDB_G0281031</name>
</gene>
<organism>
    <name type="scientific">Dictyostelium discoideum</name>
    <name type="common">Social amoeba</name>
    <dbReference type="NCBI Taxonomy" id="44689"/>
    <lineage>
        <taxon>Eukaryota</taxon>
        <taxon>Amoebozoa</taxon>
        <taxon>Evosea</taxon>
        <taxon>Eumycetozoa</taxon>
        <taxon>Dictyostelia</taxon>
        <taxon>Dictyosteliales</taxon>
        <taxon>Dictyosteliaceae</taxon>
        <taxon>Dictyostelium</taxon>
    </lineage>
</organism>
<sequence length="1269" mass="142142">MSNNSKSPPNEQHQQQPHPPDVLVQLTESFQHFFQSLSPQYQSMTSLPSINKDSYTSVGSAPTTNNNSNSNSNSNSSNRSLNNSGSSNSGGGGSNSNKKVNNNNNNNNNNNNNNLQSPTQSQFPYHYQYSSKALHDFEEKRKLLIEQLKSVKINLDTQCDDDPISFIKIRMELTKVKTSLETELKSLDELLHTTSEVEEPNPTPIDSITSLLTMIMPSSISNSVTNNTPSSATPLTLSNNNNYTSSSLATSPTTNSSSSSSSSSSSSSTHYYNSSISSNSLSSNLPPSSIPILNTSNNKNSYPNSIIPQGTPLDNPDPNLPRFPQRDHISVKLYVDCDDYFAASAQAIENATREVFITAWFLSPEVYLIRFPSLDERYRLDNLLKRKAMQGVKIFIILWDETKIATFKGSKRAKDKLEELHTNIKVIKHPPIIPIYWSHHQKTLIIDQEIAFVGGVDFCFGRFDTWCHHLIDVNSTLWKGKDYYNPILGDMGDILVPFEDSVDRKKIPRMPWHDVMAGVNGLAARDVALNFILRWNHHKDDYYPQLYFDTTPLSPVGTSQCQLLRSMDEWSGGGRIERSIHTAYVQAIEDANHYIYIENQNFVSTHAPNVWNQISFEIVKRIKRAIRKKEVFRVFIVIPCQQDGKVEETQIKGLMHWQYSTIIRGENTIMKLLRRDCPDVDLTEYICFLSLRTHAFLEGTFVTEQIYVHSKLMIVDDRTIIVGSANINDRSLIGERDSELAFIIRDEIDTIQTKMNGQDYIASRLVFNFRLRLWKEHLGLLPQINYPPHDQINNDINNIVNLNNNNNSNINNNINNNNNEINNNNNNNNNNNSNEINNNNSDGILNNSNSFHHGSVSDNLPPLNPSSNLNSSNKKLPTTTTAAAAATTTTTTTTTTTTTNGTGTTNKQKTSHHRSNSFQGLVLQSPGSNRSNLSSPQDSPQDSPRLKNLAEEISPPPTEQHQHQSPITDINLILENVDTIIHSNEQLPPPPSSTTPPPPPPPLTTTDSVIIEDYKSDGGNLNIENNNSNNTILTNAATSMNNSTSSLSSTSLPTTTTTTTAQQQQQQQQQQQQQQQQQQQQQQQQQQQQQQQQQQQPSQQQQQQQQQLSQQQQLQIKKKRSSISPSTSSNKLLLSGNGSGDSIRVVTDSGSSPRGQPRSMSSLHDHADSSYCQKSNIDLIDPTCSDFYFGVWIATAASNTRIYDTVFPAIPKNSIKTCEQFAQLQKIPVSLADSKLLSEVRGNLVFHPLDFLEGEDLQPSFLFTDDLFQ</sequence>
<protein>
    <recommendedName>
        <fullName>Phospholipase D A</fullName>
        <ecNumber>3.1.4.4</ecNumber>
    </recommendedName>
    <alternativeName>
        <fullName>Phosphatase D1</fullName>
        <shortName>PLD 1</shortName>
    </alternativeName>
</protein>
<comment type="function">
    <text evidence="4 6 7">Plays a role in cell growth. Hydrolyzes membrane phospholipids, such as PtdCho free headgroup and PtdOH (phosphatidic acid; signaling molecule on its own). Involved in the inhibition of actin-based motility and endocytosis. Its inhibition causes complete collapse of F-actin organization.</text>
</comment>
<comment type="catalytic activity">
    <reaction>
        <text>a 1,2-diacyl-sn-glycero-3-phosphocholine + H2O = a 1,2-diacyl-sn-glycero-3-phosphate + choline + H(+)</text>
        <dbReference type="Rhea" id="RHEA:14445"/>
        <dbReference type="ChEBI" id="CHEBI:15354"/>
        <dbReference type="ChEBI" id="CHEBI:15377"/>
        <dbReference type="ChEBI" id="CHEBI:15378"/>
        <dbReference type="ChEBI" id="CHEBI:57643"/>
        <dbReference type="ChEBI" id="CHEBI:58608"/>
        <dbReference type="EC" id="3.1.4.4"/>
    </reaction>
</comment>
<comment type="activity regulation">
    <text evidence="4">Inhibited by butan-1-ol.</text>
</comment>
<comment type="developmental stage">
    <text evidence="5">Expressed consistently in both vegetative and developing cells.</text>
</comment>
<comment type="similarity">
    <text evidence="8">Belongs to the phospholipase D family.</text>
</comment>